<reference key="1">
    <citation type="journal article" date="1998" name="DNA Res.">
        <title>Structural analysis of Arabidopsis thaliana chromosome 5. IV. Sequence features of the regions of 1,456,315 bp covered by nineteen physically assigned P1 and TAC clones.</title>
        <authorList>
            <person name="Sato S."/>
            <person name="Kaneko T."/>
            <person name="Kotani H."/>
            <person name="Nakamura Y."/>
            <person name="Asamizu E."/>
            <person name="Miyajima N."/>
            <person name="Tabata S."/>
        </authorList>
    </citation>
    <scope>NUCLEOTIDE SEQUENCE [LARGE SCALE GENOMIC DNA]</scope>
    <source>
        <strain>cv. Columbia</strain>
    </source>
</reference>
<reference key="2">
    <citation type="journal article" date="2017" name="Plant J.">
        <title>Araport11: a complete reannotation of the Arabidopsis thaliana reference genome.</title>
        <authorList>
            <person name="Cheng C.Y."/>
            <person name="Krishnakumar V."/>
            <person name="Chan A.P."/>
            <person name="Thibaud-Nissen F."/>
            <person name="Schobel S."/>
            <person name="Town C.D."/>
        </authorList>
    </citation>
    <scope>GENOME REANNOTATION</scope>
    <source>
        <strain>cv. Columbia</strain>
    </source>
</reference>
<reference key="3">
    <citation type="journal article" date="2003" name="Science">
        <title>Empirical analysis of transcriptional activity in the Arabidopsis genome.</title>
        <authorList>
            <person name="Yamada K."/>
            <person name="Lim J."/>
            <person name="Dale J.M."/>
            <person name="Chen H."/>
            <person name="Shinn P."/>
            <person name="Palm C.J."/>
            <person name="Southwick A.M."/>
            <person name="Wu H.C."/>
            <person name="Kim C.J."/>
            <person name="Nguyen M."/>
            <person name="Pham P.K."/>
            <person name="Cheuk R.F."/>
            <person name="Karlin-Newmann G."/>
            <person name="Liu S.X."/>
            <person name="Lam B."/>
            <person name="Sakano H."/>
            <person name="Wu T."/>
            <person name="Yu G."/>
            <person name="Miranda M."/>
            <person name="Quach H.L."/>
            <person name="Tripp M."/>
            <person name="Chang C.H."/>
            <person name="Lee J.M."/>
            <person name="Toriumi M.J."/>
            <person name="Chan M.M."/>
            <person name="Tang C.C."/>
            <person name="Onodera C.S."/>
            <person name="Deng J.M."/>
            <person name="Akiyama K."/>
            <person name="Ansari Y."/>
            <person name="Arakawa T."/>
            <person name="Banh J."/>
            <person name="Banno F."/>
            <person name="Bowser L."/>
            <person name="Brooks S.Y."/>
            <person name="Carninci P."/>
            <person name="Chao Q."/>
            <person name="Choy N."/>
            <person name="Enju A."/>
            <person name="Goldsmith A.D."/>
            <person name="Gurjal M."/>
            <person name="Hansen N.F."/>
            <person name="Hayashizaki Y."/>
            <person name="Johnson-Hopson C."/>
            <person name="Hsuan V.W."/>
            <person name="Iida K."/>
            <person name="Karnes M."/>
            <person name="Khan S."/>
            <person name="Koesema E."/>
            <person name="Ishida J."/>
            <person name="Jiang P.X."/>
            <person name="Jones T."/>
            <person name="Kawai J."/>
            <person name="Kamiya A."/>
            <person name="Meyers C."/>
            <person name="Nakajima M."/>
            <person name="Narusaka M."/>
            <person name="Seki M."/>
            <person name="Sakurai T."/>
            <person name="Satou M."/>
            <person name="Tamse R."/>
            <person name="Vaysberg M."/>
            <person name="Wallender E.K."/>
            <person name="Wong C."/>
            <person name="Yamamura Y."/>
            <person name="Yuan S."/>
            <person name="Shinozaki K."/>
            <person name="Davis R.W."/>
            <person name="Theologis A."/>
            <person name="Ecker J.R."/>
        </authorList>
    </citation>
    <scope>NUCLEOTIDE SEQUENCE [LARGE SCALE MRNA]</scope>
    <source>
        <strain>cv. Columbia</strain>
    </source>
</reference>
<reference key="4">
    <citation type="submission" date="2004-12" db="EMBL/GenBank/DDBJ databases">
        <title>Arabidopsis ORF clones.</title>
        <authorList>
            <person name="Cheuk R.F."/>
            <person name="Chen H."/>
            <person name="Kim C.J."/>
            <person name="Shinn P."/>
            <person name="Ecker J.R."/>
        </authorList>
    </citation>
    <scope>NUCLEOTIDE SEQUENCE [LARGE SCALE MRNA]</scope>
    <source>
        <strain>cv. Columbia</strain>
    </source>
</reference>
<reference key="5">
    <citation type="submission" date="2006-07" db="EMBL/GenBank/DDBJ databases">
        <title>Large-scale analysis of RIKEN Arabidopsis full-length (RAFL) cDNAs.</title>
        <authorList>
            <person name="Totoki Y."/>
            <person name="Seki M."/>
            <person name="Ishida J."/>
            <person name="Nakajima M."/>
            <person name="Enju A."/>
            <person name="Kamiya A."/>
            <person name="Narusaka M."/>
            <person name="Shin-i T."/>
            <person name="Nakagawa M."/>
            <person name="Sakamoto N."/>
            <person name="Oishi K."/>
            <person name="Kohara Y."/>
            <person name="Kobayashi M."/>
            <person name="Toyoda A."/>
            <person name="Sakaki Y."/>
            <person name="Sakurai T."/>
            <person name="Iida K."/>
            <person name="Akiyama K."/>
            <person name="Satou M."/>
            <person name="Toyoda T."/>
            <person name="Konagaya A."/>
            <person name="Carninci P."/>
            <person name="Kawai J."/>
            <person name="Hayashizaki Y."/>
            <person name="Shinozaki K."/>
        </authorList>
    </citation>
    <scope>NUCLEOTIDE SEQUENCE [LARGE SCALE MRNA]</scope>
    <source>
        <strain>cv. Columbia</strain>
    </source>
</reference>
<reference key="6">
    <citation type="submission" date="2002-03" db="EMBL/GenBank/DDBJ databases">
        <title>Full-length cDNA from Arabidopsis thaliana.</title>
        <authorList>
            <person name="Brover V.V."/>
            <person name="Troukhan M.E."/>
            <person name="Alexandrov N.A."/>
            <person name="Lu Y.-P."/>
            <person name="Flavell R.B."/>
            <person name="Feldmann K.A."/>
        </authorList>
    </citation>
    <scope>NUCLEOTIDE SEQUENCE [LARGE SCALE MRNA]</scope>
</reference>
<reference key="7">
    <citation type="journal article" date="2009" name="Dokl. Biochem. Biophys.">
        <title>Mutation in LSU4 gene affects flower development in Arabidopsis thaliana.</title>
        <authorList>
            <person name="Myakushina Y.A."/>
            <person name="Milyaeva E.L."/>
            <person name="Romanov G.A."/>
            <person name="Nikiforova V.Y."/>
        </authorList>
    </citation>
    <scope>FUNCTION</scope>
    <scope>DISRUPTION PHENOTYPE</scope>
    <scope>INDUCTION BY PHOSPHORUS; NITROGEN; POTASSIUM AND IRON DEFICIENCY</scope>
    <source>
        <strain>cv. Columbia</strain>
    </source>
</reference>
<reference key="8">
    <citation type="journal article" date="2014" name="Front. Plant Sci.">
        <title>The family of LSU-like proteins.</title>
        <authorList>
            <person name="Sirko A."/>
            <person name="Wawrzynska A."/>
            <person name="Rodriguez M.C."/>
            <person name="Sektas P."/>
        </authorList>
    </citation>
    <scope>REVIEW</scope>
    <scope>GENE FAMILY</scope>
    <scope>NOMENCLATURE</scope>
</reference>
<gene>
    <name evidence="4" type="primary">LSU4</name>
    <name evidence="6" type="ordered locus">At5g24655</name>
    <name evidence="5" type="ORF">K18P6</name>
</gene>
<proteinExistence type="evidence at transcript level"/>
<organism>
    <name type="scientific">Arabidopsis thaliana</name>
    <name type="common">Mouse-ear cress</name>
    <dbReference type="NCBI Taxonomy" id="3702"/>
    <lineage>
        <taxon>Eukaryota</taxon>
        <taxon>Viridiplantae</taxon>
        <taxon>Streptophyta</taxon>
        <taxon>Embryophyta</taxon>
        <taxon>Tracheophyta</taxon>
        <taxon>Spermatophyta</taxon>
        <taxon>Magnoliopsida</taxon>
        <taxon>eudicotyledons</taxon>
        <taxon>Gunneridae</taxon>
        <taxon>Pentapetalae</taxon>
        <taxon>rosids</taxon>
        <taxon>malvids</taxon>
        <taxon>Brassicales</taxon>
        <taxon>Brassicaceae</taxon>
        <taxon>Camelineae</taxon>
        <taxon>Arabidopsis</taxon>
    </lineage>
</organism>
<protein>
    <recommendedName>
        <fullName evidence="4">Protein RESPONSE TO LOW SULFUR 4</fullName>
    </recommendedName>
</protein>
<evidence type="ECO:0000255" key="1"/>
<evidence type="ECO:0000269" key="2">
    <source>
    </source>
</evidence>
<evidence type="ECO:0000303" key="3">
    <source>
    </source>
</evidence>
<evidence type="ECO:0000303" key="4">
    <source>
    </source>
</evidence>
<evidence type="ECO:0000305" key="5"/>
<evidence type="ECO:0000312" key="6">
    <source>
        <dbReference type="Araport" id="AT5G24655"/>
    </source>
</evidence>
<comment type="function">
    <text evidence="2">Required for flower development in short-day conditions.</text>
</comment>
<comment type="induction">
    <text evidence="3">Accumulates in response to phosphorus, nitrogen, potassium, or iron deficiency.</text>
</comment>
<comment type="disruption phenotype">
    <text evidence="2">Defects in flower and inflorescence development in short-day conditions and delayed flowering.</text>
</comment>
<accession>Q8L8S2</accession>
<dbReference type="EMBL" id="AB010068">
    <property type="status" value="NOT_ANNOTATED_CDS"/>
    <property type="molecule type" value="Genomic_DNA"/>
</dbReference>
<dbReference type="EMBL" id="CP002688">
    <property type="protein sequence ID" value="AED93345.1"/>
    <property type="molecule type" value="Genomic_DNA"/>
</dbReference>
<dbReference type="EMBL" id="BT008617">
    <property type="protein sequence ID" value="AAP40439.1"/>
    <property type="molecule type" value="mRNA"/>
</dbReference>
<dbReference type="EMBL" id="BT020287">
    <property type="protein sequence ID" value="AAV84508.1"/>
    <property type="molecule type" value="mRNA"/>
</dbReference>
<dbReference type="EMBL" id="AK229590">
    <property type="protein sequence ID" value="BAF01438.1"/>
    <property type="molecule type" value="mRNA"/>
</dbReference>
<dbReference type="EMBL" id="AY088844">
    <property type="protein sequence ID" value="AAM67151.1"/>
    <property type="molecule type" value="mRNA"/>
</dbReference>
<dbReference type="RefSeq" id="NP_568450.1">
    <property type="nucleotide sequence ID" value="NM_122374.4"/>
</dbReference>
<dbReference type="SMR" id="Q8L8S2"/>
<dbReference type="FunCoup" id="Q8L8S2">
    <property type="interactions" value="4"/>
</dbReference>
<dbReference type="STRING" id="3702.Q8L8S2"/>
<dbReference type="PaxDb" id="3702-AT5G24655.1"/>
<dbReference type="EnsemblPlants" id="AT5G24655.1">
    <property type="protein sequence ID" value="AT5G24655.1"/>
    <property type="gene ID" value="AT5G24655"/>
</dbReference>
<dbReference type="GeneID" id="832537"/>
<dbReference type="Gramene" id="AT5G24655.1">
    <property type="protein sequence ID" value="AT5G24655.1"/>
    <property type="gene ID" value="AT5G24655"/>
</dbReference>
<dbReference type="KEGG" id="ath:AT5G24655"/>
<dbReference type="Araport" id="AT5G24655"/>
<dbReference type="TAIR" id="AT5G24655">
    <property type="gene designation" value="LSU4"/>
</dbReference>
<dbReference type="eggNOG" id="ENOG502SZ0Q">
    <property type="taxonomic scope" value="Eukaryota"/>
</dbReference>
<dbReference type="HOGENOM" id="CLU_152833_0_0_1"/>
<dbReference type="InParanoid" id="Q8L8S2"/>
<dbReference type="OMA" id="HARDCHA"/>
<dbReference type="OrthoDB" id="1888446at2759"/>
<dbReference type="PhylomeDB" id="Q8L8S2"/>
<dbReference type="PRO" id="PR:Q8L8S2"/>
<dbReference type="Proteomes" id="UP000006548">
    <property type="component" value="Chromosome 5"/>
</dbReference>
<dbReference type="ExpressionAtlas" id="Q8L8S2">
    <property type="expression patterns" value="baseline and differential"/>
</dbReference>
<dbReference type="GO" id="GO:0098869">
    <property type="term" value="P:cellular oxidant detoxification"/>
    <property type="evidence" value="ECO:0007669"/>
    <property type="project" value="InterPro"/>
</dbReference>
<dbReference type="GO" id="GO:0009909">
    <property type="term" value="P:regulation of flower development"/>
    <property type="evidence" value="ECO:0000315"/>
    <property type="project" value="UniProtKB"/>
</dbReference>
<dbReference type="GO" id="GO:0048587">
    <property type="term" value="P:regulation of short-day photoperiodism, flowering"/>
    <property type="evidence" value="ECO:0000315"/>
    <property type="project" value="UniProtKB"/>
</dbReference>
<dbReference type="InterPro" id="IPR039282">
    <property type="entry name" value="LSU"/>
</dbReference>
<dbReference type="PANTHER" id="PTHR34283">
    <property type="entry name" value="PROTEIN RESPONSE TO LOW SULFUR 1"/>
    <property type="match status" value="1"/>
</dbReference>
<dbReference type="PANTHER" id="PTHR34283:SF5">
    <property type="entry name" value="PROTEIN RESPONSE TO LOW SULFUR 2-RELATED"/>
    <property type="match status" value="1"/>
</dbReference>
<dbReference type="Pfam" id="PF24980">
    <property type="entry name" value="LSU"/>
    <property type="match status" value="1"/>
</dbReference>
<name>LSU4_ARATH</name>
<feature type="chain" id="PRO_0000437695" description="Protein RESPONSE TO LOW SULFUR 4">
    <location>
        <begin position="1"/>
        <end position="92"/>
    </location>
</feature>
<feature type="coiled-coil region" evidence="1">
    <location>
        <begin position="8"/>
        <end position="63"/>
    </location>
</feature>
<sequence length="92" mass="10563">MGKGGNYVMVAASEVEELRQKNGEMEKAVEEMRKEMLQLWRRTQVAEEAEEHLCSQLAELEAESLDQARDYHTRIIFLTNQLSRFSSDSASP</sequence>
<keyword id="KW-0175">Coiled coil</keyword>
<keyword id="KW-1185">Reference proteome</keyword>